<sequence length="435" mass="50021">MAPFGRNLLKTRHKNRSPTKDMDSEEKEIVVWVCQEEKLVCGLTKRTTSADVIQALLEEHEATFGEKRFLLGKPSDYCIIEKWRGSERVLPPLTRILKLWKAWGDEQPNMQFVLVKADAFLPVPLWRTAEAKLVQNTEKLWELSPANYMKTLPPDKQKRIVRKTFRKLAKIKQDTVSHDRDNMETLVHLIISQDHTIHQQVKRMKELDLEIEKCEAKFHLDRVENDGENYVQDAYLMPSFSEVEQNLDLQYEENQTLEDLSESDGIEQLEERLKYYRILIDKLSAEIEKEVKSVCIDINEDAEGEAASELESSNLESVKCDLEKSMKAGLKIHSHLSGIQKEIKYSDSLLQMKAKEYELLAKEFNSLHISNKDGCQLKENRAKESEVPSSNGEIPPFTQRVFSNYTNDTDSDTGISSNHSQDSETTVGDVVLLST</sequence>
<proteinExistence type="evidence at protein level"/>
<feature type="chain" id="PRO_0000299452" description="Ras association domain-containing protein 9">
    <location>
        <begin position="1"/>
        <end position="435"/>
    </location>
</feature>
<feature type="domain" description="Ras-associating" evidence="3">
    <location>
        <begin position="25"/>
        <end position="119"/>
    </location>
</feature>
<feature type="region of interest" description="Disordered" evidence="4">
    <location>
        <begin position="1"/>
        <end position="22"/>
    </location>
</feature>
<feature type="region of interest" description="Disordered" evidence="4">
    <location>
        <begin position="380"/>
        <end position="435"/>
    </location>
</feature>
<feature type="coiled-coil region" evidence="2">
    <location>
        <begin position="195"/>
        <end position="290"/>
    </location>
</feature>
<feature type="compositionally biased region" description="Polar residues" evidence="4">
    <location>
        <begin position="400"/>
        <end position="426"/>
    </location>
</feature>
<feature type="sequence variant" id="VAR_034820" description="In dbSNP:rs7397266.">
    <original>A</original>
    <variation>T</variation>
    <location>
        <position position="285"/>
    </location>
</feature>
<feature type="sequence conflict" description="In Ref. 1; AAD03250." evidence="5" ref="1">
    <original>L</original>
    <variation>F</variation>
    <location>
        <position position="39"/>
    </location>
</feature>
<name>RASF9_HUMAN</name>
<evidence type="ECO:0000250" key="1"/>
<evidence type="ECO:0000255" key="2"/>
<evidence type="ECO:0000255" key="3">
    <source>
        <dbReference type="PROSITE-ProRule" id="PRU00166"/>
    </source>
</evidence>
<evidence type="ECO:0000256" key="4">
    <source>
        <dbReference type="SAM" id="MobiDB-lite"/>
    </source>
</evidence>
<evidence type="ECO:0000305" key="5"/>
<protein>
    <recommendedName>
        <fullName>Ras association domain-containing protein 9</fullName>
    </recommendedName>
    <alternativeName>
        <fullName>PAM COOH-terminal interactor protein 1</fullName>
        <shortName>P-CIP1</shortName>
    </alternativeName>
    <alternativeName>
        <fullName>Peptidylglycine alpha-amidating monooxygenase COOH-terminal interactor</fullName>
    </alternativeName>
</protein>
<accession>O75901</accession>
<accession>B3KMQ4</accession>
<accession>Q8N5U8</accession>
<gene>
    <name type="primary">RASSF9</name>
    <name type="synonym">PAMCI</name>
    <name type="synonym">PCIP1</name>
</gene>
<organism>
    <name type="scientific">Homo sapiens</name>
    <name type="common">Human</name>
    <dbReference type="NCBI Taxonomy" id="9606"/>
    <lineage>
        <taxon>Eukaryota</taxon>
        <taxon>Metazoa</taxon>
        <taxon>Chordata</taxon>
        <taxon>Craniata</taxon>
        <taxon>Vertebrata</taxon>
        <taxon>Euteleostomi</taxon>
        <taxon>Mammalia</taxon>
        <taxon>Eutheria</taxon>
        <taxon>Euarchontoglires</taxon>
        <taxon>Primates</taxon>
        <taxon>Haplorrhini</taxon>
        <taxon>Catarrhini</taxon>
        <taxon>Hominidae</taxon>
        <taxon>Homo</taxon>
    </lineage>
</organism>
<comment type="function">
    <text evidence="1">May play a role in regulating vesicuar trafficking in cells.</text>
</comment>
<comment type="subunit">
    <text evidence="1">Interacts with PAM.</text>
</comment>
<comment type="subcellular location">
    <subcellularLocation>
        <location>Endosome</location>
    </subcellularLocation>
    <text evidence="1">Accumulates on perinuclear endosomes.</text>
</comment>
<keyword id="KW-0175">Coiled coil</keyword>
<keyword id="KW-0967">Endosome</keyword>
<keyword id="KW-1267">Proteomics identification</keyword>
<keyword id="KW-1185">Reference proteome</keyword>
<dbReference type="EMBL" id="AF056209">
    <property type="protein sequence ID" value="AAD03250.1"/>
    <property type="molecule type" value="mRNA"/>
</dbReference>
<dbReference type="EMBL" id="AK022089">
    <property type="protein sequence ID" value="BAG51066.1"/>
    <property type="molecule type" value="mRNA"/>
</dbReference>
<dbReference type="EMBL" id="CH471054">
    <property type="protein sequence ID" value="EAW97399.1"/>
    <property type="molecule type" value="Genomic_DNA"/>
</dbReference>
<dbReference type="EMBL" id="BC031589">
    <property type="protein sequence ID" value="AAH31589.1"/>
    <property type="molecule type" value="mRNA"/>
</dbReference>
<dbReference type="CCDS" id="CCDS44950.1"/>
<dbReference type="RefSeq" id="NP_005438.2">
    <property type="nucleotide sequence ID" value="NM_005447.4"/>
</dbReference>
<dbReference type="SMR" id="O75901"/>
<dbReference type="BioGRID" id="114619">
    <property type="interactions" value="38"/>
</dbReference>
<dbReference type="FunCoup" id="O75901">
    <property type="interactions" value="45"/>
</dbReference>
<dbReference type="IntAct" id="O75901">
    <property type="interactions" value="34"/>
</dbReference>
<dbReference type="STRING" id="9606.ENSP00000354884"/>
<dbReference type="GlyGen" id="O75901">
    <property type="glycosylation" value="1 site, 1 O-linked glycan (1 site)"/>
</dbReference>
<dbReference type="iPTMnet" id="O75901"/>
<dbReference type="PhosphoSitePlus" id="O75901"/>
<dbReference type="BioMuta" id="RASSF9"/>
<dbReference type="jPOST" id="O75901"/>
<dbReference type="MassIVE" id="O75901"/>
<dbReference type="PaxDb" id="9606-ENSP00000354884"/>
<dbReference type="PeptideAtlas" id="O75901"/>
<dbReference type="ProteomicsDB" id="50256"/>
<dbReference type="Antibodypedia" id="29875">
    <property type="antibodies" value="118 antibodies from 23 providers"/>
</dbReference>
<dbReference type="DNASU" id="9182"/>
<dbReference type="Ensembl" id="ENST00000361228.5">
    <property type="protein sequence ID" value="ENSP00000354884.3"/>
    <property type="gene ID" value="ENSG00000198774.5"/>
</dbReference>
<dbReference type="GeneID" id="9182"/>
<dbReference type="KEGG" id="hsa:9182"/>
<dbReference type="MANE-Select" id="ENST00000361228.5">
    <property type="protein sequence ID" value="ENSP00000354884.3"/>
    <property type="RefSeq nucleotide sequence ID" value="NM_005447.4"/>
    <property type="RefSeq protein sequence ID" value="NP_005438.2"/>
</dbReference>
<dbReference type="UCSC" id="uc001taf.2">
    <property type="organism name" value="human"/>
</dbReference>
<dbReference type="AGR" id="HGNC:15739"/>
<dbReference type="CTD" id="9182"/>
<dbReference type="DisGeNET" id="9182"/>
<dbReference type="GeneCards" id="RASSF9"/>
<dbReference type="HGNC" id="HGNC:15739">
    <property type="gene designation" value="RASSF9"/>
</dbReference>
<dbReference type="HPA" id="ENSG00000198774">
    <property type="expression patterns" value="Low tissue specificity"/>
</dbReference>
<dbReference type="MIM" id="610383">
    <property type="type" value="gene"/>
</dbReference>
<dbReference type="neXtProt" id="NX_O75901"/>
<dbReference type="OpenTargets" id="ENSG00000198774"/>
<dbReference type="PharmGKB" id="PA162400725"/>
<dbReference type="VEuPathDB" id="HostDB:ENSG00000198774"/>
<dbReference type="eggNOG" id="KOG1574">
    <property type="taxonomic scope" value="Eukaryota"/>
</dbReference>
<dbReference type="GeneTree" id="ENSGT00950000182839"/>
<dbReference type="HOGENOM" id="CLU_036954_0_0_1"/>
<dbReference type="InParanoid" id="O75901"/>
<dbReference type="OMA" id="VQESYLM"/>
<dbReference type="OrthoDB" id="10034447at2759"/>
<dbReference type="PAN-GO" id="O75901">
    <property type="GO annotations" value="4 GO annotations based on evolutionary models"/>
</dbReference>
<dbReference type="PhylomeDB" id="O75901"/>
<dbReference type="TreeFam" id="TF326923"/>
<dbReference type="PathwayCommons" id="O75901"/>
<dbReference type="SignaLink" id="O75901"/>
<dbReference type="BioGRID-ORCS" id="9182">
    <property type="hits" value="12 hits in 1141 CRISPR screens"/>
</dbReference>
<dbReference type="GeneWiki" id="RASSF9"/>
<dbReference type="GenomeRNAi" id="9182"/>
<dbReference type="Pharos" id="O75901">
    <property type="development level" value="Tbio"/>
</dbReference>
<dbReference type="PRO" id="PR:O75901"/>
<dbReference type="Proteomes" id="UP000005640">
    <property type="component" value="Chromosome 12"/>
</dbReference>
<dbReference type="RNAct" id="O75901">
    <property type="molecule type" value="protein"/>
</dbReference>
<dbReference type="Bgee" id="ENSG00000198774">
    <property type="expression patterns" value="Expressed in mucosa of paranasal sinus and 109 other cell types or tissues"/>
</dbReference>
<dbReference type="GO" id="GO:0005829">
    <property type="term" value="C:cytosol"/>
    <property type="evidence" value="ECO:0000314"/>
    <property type="project" value="UniProtKB"/>
</dbReference>
<dbReference type="GO" id="GO:0005768">
    <property type="term" value="C:endosome"/>
    <property type="evidence" value="ECO:0000314"/>
    <property type="project" value="UniProtKB"/>
</dbReference>
<dbReference type="GO" id="GO:0070062">
    <property type="term" value="C:extracellular exosome"/>
    <property type="evidence" value="ECO:0007005"/>
    <property type="project" value="UniProtKB"/>
</dbReference>
<dbReference type="GO" id="GO:0055037">
    <property type="term" value="C:recycling endosome"/>
    <property type="evidence" value="ECO:0000318"/>
    <property type="project" value="GO_Central"/>
</dbReference>
<dbReference type="GO" id="GO:0012510">
    <property type="term" value="C:trans-Golgi network transport vesicle membrane"/>
    <property type="evidence" value="ECO:0000314"/>
    <property type="project" value="UniProtKB"/>
</dbReference>
<dbReference type="GO" id="GO:0016197">
    <property type="term" value="P:endosomal transport"/>
    <property type="evidence" value="ECO:0000303"/>
    <property type="project" value="UniProtKB"/>
</dbReference>
<dbReference type="GO" id="GO:0046907">
    <property type="term" value="P:intracellular transport"/>
    <property type="evidence" value="ECO:0000318"/>
    <property type="project" value="GO_Central"/>
</dbReference>
<dbReference type="GO" id="GO:0006605">
    <property type="term" value="P:protein targeting"/>
    <property type="evidence" value="ECO:0000303"/>
    <property type="project" value="UniProtKB"/>
</dbReference>
<dbReference type="GO" id="GO:0007165">
    <property type="term" value="P:signal transduction"/>
    <property type="evidence" value="ECO:0007669"/>
    <property type="project" value="InterPro"/>
</dbReference>
<dbReference type="CDD" id="cd16133">
    <property type="entry name" value="RA_RASSF9"/>
    <property type="match status" value="1"/>
</dbReference>
<dbReference type="FunFam" id="3.10.20.90:FF:000113">
    <property type="entry name" value="ras association domain-containing protein 9"/>
    <property type="match status" value="1"/>
</dbReference>
<dbReference type="Gene3D" id="3.10.20.90">
    <property type="entry name" value="Phosphatidylinositol 3-kinase Catalytic Subunit, Chain A, domain 1"/>
    <property type="match status" value="1"/>
</dbReference>
<dbReference type="InterPro" id="IPR033593">
    <property type="entry name" value="N-RASSF"/>
</dbReference>
<dbReference type="InterPro" id="IPR000159">
    <property type="entry name" value="RA_dom"/>
</dbReference>
<dbReference type="InterPro" id="IPR033633">
    <property type="entry name" value="RASSF9_RA"/>
</dbReference>
<dbReference type="InterPro" id="IPR029071">
    <property type="entry name" value="Ubiquitin-like_domsf"/>
</dbReference>
<dbReference type="PANTHER" id="PTHR15286:SF10">
    <property type="entry name" value="RAS ASSOCIATION DOMAIN-CONTAINING PROTEIN 9"/>
    <property type="match status" value="1"/>
</dbReference>
<dbReference type="PANTHER" id="PTHR15286">
    <property type="entry name" value="RAS-ASSOCIATING DOMAIN CONTAINING PROTEIN"/>
    <property type="match status" value="1"/>
</dbReference>
<dbReference type="SMART" id="SM00314">
    <property type="entry name" value="RA"/>
    <property type="match status" value="1"/>
</dbReference>
<dbReference type="SUPFAM" id="SSF54236">
    <property type="entry name" value="Ubiquitin-like"/>
    <property type="match status" value="1"/>
</dbReference>
<dbReference type="PROSITE" id="PS50200">
    <property type="entry name" value="RA"/>
    <property type="match status" value="1"/>
</dbReference>
<reference key="1">
    <citation type="journal article" date="1998" name="J. Biol. Chem.">
        <title>P-CIP1, a novel protein that interacts with the cytosolic domain of peptidylglycine alpha-amidating monooxygenase, is associated with endosomes.</title>
        <authorList>
            <person name="Chen L."/>
            <person name="Johnson R.C."/>
            <person name="Milgram S.L."/>
        </authorList>
    </citation>
    <scope>NUCLEOTIDE SEQUENCE [MRNA]</scope>
</reference>
<reference key="2">
    <citation type="journal article" date="2004" name="Nat. Genet.">
        <title>Complete sequencing and characterization of 21,243 full-length human cDNAs.</title>
        <authorList>
            <person name="Ota T."/>
            <person name="Suzuki Y."/>
            <person name="Nishikawa T."/>
            <person name="Otsuki T."/>
            <person name="Sugiyama T."/>
            <person name="Irie R."/>
            <person name="Wakamatsu A."/>
            <person name="Hayashi K."/>
            <person name="Sato H."/>
            <person name="Nagai K."/>
            <person name="Kimura K."/>
            <person name="Makita H."/>
            <person name="Sekine M."/>
            <person name="Obayashi M."/>
            <person name="Nishi T."/>
            <person name="Shibahara T."/>
            <person name="Tanaka T."/>
            <person name="Ishii S."/>
            <person name="Yamamoto J."/>
            <person name="Saito K."/>
            <person name="Kawai Y."/>
            <person name="Isono Y."/>
            <person name="Nakamura Y."/>
            <person name="Nagahari K."/>
            <person name="Murakami K."/>
            <person name="Yasuda T."/>
            <person name="Iwayanagi T."/>
            <person name="Wagatsuma M."/>
            <person name="Shiratori A."/>
            <person name="Sudo H."/>
            <person name="Hosoiri T."/>
            <person name="Kaku Y."/>
            <person name="Kodaira H."/>
            <person name="Kondo H."/>
            <person name="Sugawara M."/>
            <person name="Takahashi M."/>
            <person name="Kanda K."/>
            <person name="Yokoi T."/>
            <person name="Furuya T."/>
            <person name="Kikkawa E."/>
            <person name="Omura Y."/>
            <person name="Abe K."/>
            <person name="Kamihara K."/>
            <person name="Katsuta N."/>
            <person name="Sato K."/>
            <person name="Tanikawa M."/>
            <person name="Yamazaki M."/>
            <person name="Ninomiya K."/>
            <person name="Ishibashi T."/>
            <person name="Yamashita H."/>
            <person name="Murakawa K."/>
            <person name="Fujimori K."/>
            <person name="Tanai H."/>
            <person name="Kimata M."/>
            <person name="Watanabe M."/>
            <person name="Hiraoka S."/>
            <person name="Chiba Y."/>
            <person name="Ishida S."/>
            <person name="Ono Y."/>
            <person name="Takiguchi S."/>
            <person name="Watanabe S."/>
            <person name="Yosida M."/>
            <person name="Hotuta T."/>
            <person name="Kusano J."/>
            <person name="Kanehori K."/>
            <person name="Takahashi-Fujii A."/>
            <person name="Hara H."/>
            <person name="Tanase T.-O."/>
            <person name="Nomura Y."/>
            <person name="Togiya S."/>
            <person name="Komai F."/>
            <person name="Hara R."/>
            <person name="Takeuchi K."/>
            <person name="Arita M."/>
            <person name="Imose N."/>
            <person name="Musashino K."/>
            <person name="Yuuki H."/>
            <person name="Oshima A."/>
            <person name="Sasaki N."/>
            <person name="Aotsuka S."/>
            <person name="Yoshikawa Y."/>
            <person name="Matsunawa H."/>
            <person name="Ichihara T."/>
            <person name="Shiohata N."/>
            <person name="Sano S."/>
            <person name="Moriya S."/>
            <person name="Momiyama H."/>
            <person name="Satoh N."/>
            <person name="Takami S."/>
            <person name="Terashima Y."/>
            <person name="Suzuki O."/>
            <person name="Nakagawa S."/>
            <person name="Senoh A."/>
            <person name="Mizoguchi H."/>
            <person name="Goto Y."/>
            <person name="Shimizu F."/>
            <person name="Wakebe H."/>
            <person name="Hishigaki H."/>
            <person name="Watanabe T."/>
            <person name="Sugiyama A."/>
            <person name="Takemoto M."/>
            <person name="Kawakami B."/>
            <person name="Yamazaki M."/>
            <person name="Watanabe K."/>
            <person name="Kumagai A."/>
            <person name="Itakura S."/>
            <person name="Fukuzumi Y."/>
            <person name="Fujimori Y."/>
            <person name="Komiyama M."/>
            <person name="Tashiro H."/>
            <person name="Tanigami A."/>
            <person name="Fujiwara T."/>
            <person name="Ono T."/>
            <person name="Yamada K."/>
            <person name="Fujii Y."/>
            <person name="Ozaki K."/>
            <person name="Hirao M."/>
            <person name="Ohmori Y."/>
            <person name="Kawabata A."/>
            <person name="Hikiji T."/>
            <person name="Kobatake N."/>
            <person name="Inagaki H."/>
            <person name="Ikema Y."/>
            <person name="Okamoto S."/>
            <person name="Okitani R."/>
            <person name="Kawakami T."/>
            <person name="Noguchi S."/>
            <person name="Itoh T."/>
            <person name="Shigeta K."/>
            <person name="Senba T."/>
            <person name="Matsumura K."/>
            <person name="Nakajima Y."/>
            <person name="Mizuno T."/>
            <person name="Morinaga M."/>
            <person name="Sasaki M."/>
            <person name="Togashi T."/>
            <person name="Oyama M."/>
            <person name="Hata H."/>
            <person name="Watanabe M."/>
            <person name="Komatsu T."/>
            <person name="Mizushima-Sugano J."/>
            <person name="Satoh T."/>
            <person name="Shirai Y."/>
            <person name="Takahashi Y."/>
            <person name="Nakagawa K."/>
            <person name="Okumura K."/>
            <person name="Nagase T."/>
            <person name="Nomura N."/>
            <person name="Kikuchi H."/>
            <person name="Masuho Y."/>
            <person name="Yamashita R."/>
            <person name="Nakai K."/>
            <person name="Yada T."/>
            <person name="Nakamura Y."/>
            <person name="Ohara O."/>
            <person name="Isogai T."/>
            <person name="Sugano S."/>
        </authorList>
    </citation>
    <scope>NUCLEOTIDE SEQUENCE [LARGE SCALE MRNA]</scope>
    <source>
        <tissue>Embryo</tissue>
    </source>
</reference>
<reference key="3">
    <citation type="submission" date="2005-07" db="EMBL/GenBank/DDBJ databases">
        <authorList>
            <person name="Mural R.J."/>
            <person name="Istrail S."/>
            <person name="Sutton G.G."/>
            <person name="Florea L."/>
            <person name="Halpern A.L."/>
            <person name="Mobarry C.M."/>
            <person name="Lippert R."/>
            <person name="Walenz B."/>
            <person name="Shatkay H."/>
            <person name="Dew I."/>
            <person name="Miller J.R."/>
            <person name="Flanigan M.J."/>
            <person name="Edwards N.J."/>
            <person name="Bolanos R."/>
            <person name="Fasulo D."/>
            <person name="Halldorsson B.V."/>
            <person name="Hannenhalli S."/>
            <person name="Turner R."/>
            <person name="Yooseph S."/>
            <person name="Lu F."/>
            <person name="Nusskern D.R."/>
            <person name="Shue B.C."/>
            <person name="Zheng X.H."/>
            <person name="Zhong F."/>
            <person name="Delcher A.L."/>
            <person name="Huson D.H."/>
            <person name="Kravitz S.A."/>
            <person name="Mouchard L."/>
            <person name="Reinert K."/>
            <person name="Remington K.A."/>
            <person name="Clark A.G."/>
            <person name="Waterman M.S."/>
            <person name="Eichler E.E."/>
            <person name="Adams M.D."/>
            <person name="Hunkapiller M.W."/>
            <person name="Myers E.W."/>
            <person name="Venter J.C."/>
        </authorList>
    </citation>
    <scope>NUCLEOTIDE SEQUENCE [LARGE SCALE GENOMIC DNA]</scope>
</reference>
<reference key="4">
    <citation type="journal article" date="2004" name="Genome Res.">
        <title>The status, quality, and expansion of the NIH full-length cDNA project: the Mammalian Gene Collection (MGC).</title>
        <authorList>
            <consortium name="The MGC Project Team"/>
        </authorList>
    </citation>
    <scope>NUCLEOTIDE SEQUENCE [LARGE SCALE MRNA]</scope>
    <source>
        <tissue>Colon</tissue>
    </source>
</reference>
<reference key="5">
    <citation type="journal article" date="2008" name="Mol. Biol. Cell">
        <title>RASSF7 is a member of a new family of RAS association domain-containing proteins and is required for completing mitosis.</title>
        <authorList>
            <person name="Sherwood V."/>
            <person name="Manbodh R."/>
            <person name="Sheppard C."/>
            <person name="Chalmers A.D."/>
        </authorList>
    </citation>
    <scope>IDENTIFICATION</scope>
</reference>